<evidence type="ECO:0000255" key="1">
    <source>
        <dbReference type="HAMAP-Rule" id="MF_00788"/>
    </source>
</evidence>
<evidence type="ECO:0000305" key="2"/>
<organism>
    <name type="scientific">Thermofilum pendens (strain DSM 2475 / Hrk 5)</name>
    <dbReference type="NCBI Taxonomy" id="368408"/>
    <lineage>
        <taxon>Archaea</taxon>
        <taxon>Thermoproteota</taxon>
        <taxon>Thermoprotei</taxon>
        <taxon>Thermofilales</taxon>
        <taxon>Thermofilaceae</taxon>
        <taxon>Thermofilum</taxon>
    </lineage>
</organism>
<proteinExistence type="inferred from homology"/>
<name>RL40_THEPD</name>
<protein>
    <recommendedName>
        <fullName evidence="1">Large ribosomal subunit protein eL40</fullName>
    </recommendedName>
    <alternativeName>
        <fullName evidence="2">50S ribosomal protein L40e</fullName>
    </alternativeName>
</protein>
<keyword id="KW-1185">Reference proteome</keyword>
<keyword id="KW-0687">Ribonucleoprotein</keyword>
<keyword id="KW-0689">Ribosomal protein</keyword>
<gene>
    <name evidence="1" type="primary">rpl40e</name>
    <name type="ordered locus">Tpen_0296</name>
</gene>
<accession>A1RWX6</accession>
<sequence>MPIRDPEKLQLALEHHFKVKICRRCNARNPWNAERCRRCKSRDLRPKRYKK</sequence>
<comment type="similarity">
    <text evidence="1">Belongs to the eukaryotic ribosomal protein eL40 family.</text>
</comment>
<feature type="chain" id="PRO_1000046895" description="Large ribosomal subunit protein eL40">
    <location>
        <begin position="1"/>
        <end position="51"/>
    </location>
</feature>
<dbReference type="EMBL" id="CP000505">
    <property type="protein sequence ID" value="ABL77706.1"/>
    <property type="molecule type" value="Genomic_DNA"/>
</dbReference>
<dbReference type="RefSeq" id="WP_011751971.1">
    <property type="nucleotide sequence ID" value="NC_008698.1"/>
</dbReference>
<dbReference type="SMR" id="A1RWX6"/>
<dbReference type="STRING" id="368408.Tpen_0296"/>
<dbReference type="EnsemblBacteria" id="ABL77706">
    <property type="protein sequence ID" value="ABL77706"/>
    <property type="gene ID" value="Tpen_0296"/>
</dbReference>
<dbReference type="GeneID" id="4601305"/>
<dbReference type="KEGG" id="tpe:Tpen_0296"/>
<dbReference type="eggNOG" id="arCOG04049">
    <property type="taxonomic scope" value="Archaea"/>
</dbReference>
<dbReference type="HOGENOM" id="CLU_175093_1_0_2"/>
<dbReference type="OrthoDB" id="45138at2157"/>
<dbReference type="Proteomes" id="UP000000641">
    <property type="component" value="Chromosome"/>
</dbReference>
<dbReference type="GO" id="GO:1990904">
    <property type="term" value="C:ribonucleoprotein complex"/>
    <property type="evidence" value="ECO:0007669"/>
    <property type="project" value="UniProtKB-KW"/>
</dbReference>
<dbReference type="GO" id="GO:0005840">
    <property type="term" value="C:ribosome"/>
    <property type="evidence" value="ECO:0007669"/>
    <property type="project" value="UniProtKB-KW"/>
</dbReference>
<dbReference type="GO" id="GO:0003735">
    <property type="term" value="F:structural constituent of ribosome"/>
    <property type="evidence" value="ECO:0007669"/>
    <property type="project" value="InterPro"/>
</dbReference>
<dbReference type="GO" id="GO:0006412">
    <property type="term" value="P:translation"/>
    <property type="evidence" value="ECO:0007669"/>
    <property type="project" value="UniProtKB-UniRule"/>
</dbReference>
<dbReference type="Gene3D" id="4.10.1060.50">
    <property type="match status" value="1"/>
</dbReference>
<dbReference type="HAMAP" id="MF_00788">
    <property type="entry name" value="Ribosomal_eL40"/>
    <property type="match status" value="1"/>
</dbReference>
<dbReference type="InterPro" id="IPR023657">
    <property type="entry name" value="Ribosomal_eL40_arc"/>
</dbReference>
<dbReference type="InterPro" id="IPR001975">
    <property type="entry name" value="Ribosomal_eL40_dom"/>
</dbReference>
<dbReference type="InterPro" id="IPR038587">
    <property type="entry name" value="Ribosomal_eL40_sf"/>
</dbReference>
<dbReference type="InterPro" id="IPR011332">
    <property type="entry name" value="Ribosomal_zn-bd"/>
</dbReference>
<dbReference type="NCBIfam" id="NF003161">
    <property type="entry name" value="PRK04136.1"/>
    <property type="match status" value="1"/>
</dbReference>
<dbReference type="PANTHER" id="PTHR39649">
    <property type="entry name" value="50S RIBOSOMAL PROTEIN L40E"/>
    <property type="match status" value="1"/>
</dbReference>
<dbReference type="PANTHER" id="PTHR39649:SF1">
    <property type="entry name" value="LARGE RIBOSOMAL SUBUNIT PROTEIN EL40"/>
    <property type="match status" value="1"/>
</dbReference>
<dbReference type="Pfam" id="PF01020">
    <property type="entry name" value="Ribosomal_L40e"/>
    <property type="match status" value="1"/>
</dbReference>
<dbReference type="SMART" id="SM01377">
    <property type="entry name" value="Ribosomal_L40e"/>
    <property type="match status" value="1"/>
</dbReference>
<dbReference type="SUPFAM" id="SSF57829">
    <property type="entry name" value="Zn-binding ribosomal proteins"/>
    <property type="match status" value="1"/>
</dbReference>
<reference key="1">
    <citation type="journal article" date="2008" name="J. Bacteriol.">
        <title>Genome sequence of Thermofilum pendens reveals an exceptional loss of biosynthetic pathways without genome reduction.</title>
        <authorList>
            <person name="Anderson I."/>
            <person name="Rodriguez J."/>
            <person name="Susanti D."/>
            <person name="Porat I."/>
            <person name="Reich C."/>
            <person name="Ulrich L.E."/>
            <person name="Elkins J.G."/>
            <person name="Mavromatis K."/>
            <person name="Lykidis A."/>
            <person name="Kim E."/>
            <person name="Thompson L.S."/>
            <person name="Nolan M."/>
            <person name="Land M."/>
            <person name="Copeland A."/>
            <person name="Lapidus A."/>
            <person name="Lucas S."/>
            <person name="Detter C."/>
            <person name="Zhulin I.B."/>
            <person name="Olsen G.J."/>
            <person name="Whitman W."/>
            <person name="Mukhopadhyay B."/>
            <person name="Bristow J."/>
            <person name="Kyrpides N."/>
        </authorList>
    </citation>
    <scope>NUCLEOTIDE SEQUENCE [LARGE SCALE GENOMIC DNA]</scope>
    <source>
        <strain>DSM 2475 / Hrk 5</strain>
    </source>
</reference>